<accession>Q9ZEM7</accession>
<evidence type="ECO:0000250" key="1"/>
<evidence type="ECO:0000305" key="2"/>
<comment type="function">
    <text>Catalyzes the aldol condensation of dihydroxyacetone phosphate (DHAP or glycerone-phosphate) with glyceraldehyde 3-phosphate (G3P) to form fructose 1,6-bisphosphate (FBP) in gluconeogenesis and the reverse reaction in glycolysis.</text>
</comment>
<comment type="catalytic activity">
    <reaction>
        <text>beta-D-fructose 1,6-bisphosphate = D-glyceraldehyde 3-phosphate + dihydroxyacetone phosphate</text>
        <dbReference type="Rhea" id="RHEA:14729"/>
        <dbReference type="ChEBI" id="CHEBI:32966"/>
        <dbReference type="ChEBI" id="CHEBI:57642"/>
        <dbReference type="ChEBI" id="CHEBI:59776"/>
        <dbReference type="EC" id="4.1.2.13"/>
    </reaction>
</comment>
<comment type="cofactor">
    <cofactor evidence="1">
        <name>Zn(2+)</name>
        <dbReference type="ChEBI" id="CHEBI:29105"/>
    </cofactor>
    <text evidence="1">Binds 2 Zn(2+) ions per subunit. One is catalytic and the other provides a structural contribution.</text>
</comment>
<comment type="biophysicochemical properties">
    <phDependence>
        <text>Optimum pH is 7.5.</text>
    </phDependence>
</comment>
<comment type="pathway">
    <text>Carbohydrate degradation; glycolysis; D-glyceraldehyde 3-phosphate and glycerone phosphate from D-glucose: step 4/4.</text>
</comment>
<comment type="similarity">
    <text evidence="2">Belongs to the class II fructose-bisphosphate aldolase family.</text>
</comment>
<protein>
    <recommendedName>
        <fullName>Fructose-bisphosphate aldolase</fullName>
        <shortName>FBP aldolase</shortName>
        <shortName>FBPA</shortName>
        <ecNumber>4.1.2.13</ecNumber>
    </recommendedName>
    <alternativeName>
        <fullName>Fructose-1,6-bisphosphate aldolase</fullName>
    </alternativeName>
</protein>
<proteinExistence type="evidence at protein level"/>
<keyword id="KW-0324">Glycolysis</keyword>
<keyword id="KW-0456">Lyase</keyword>
<keyword id="KW-0479">Metal-binding</keyword>
<keyword id="KW-0862">Zinc</keyword>
<name>ALF_STRGB</name>
<sequence>MPIATPEVYNEMLDRAKAGKFAYPAINVTSSQTLNAALRGFAEAESDGIVQISTGGAEFLGGQYSKDMVTGAVALAEFAHIIAEKYPVNIALHTDHCPKDKLDGYVRPLLALSKKRVEAGLGPLFQSHMWDGSAEPLADNLAIAQELLETARAAQIILEVEITPTGGEEDGVSHEINDSLYTTVDDAIRTAEALGLGEKGRYLLAASFGNVHGVYKPGNVVLRPELLKELNEGVAARFGKESPFDFVFHGGSGSSEEEIRTALENGVVKMNLDTDTQYAFTRPVAGHMFANYDGVLKVDGEVGNKKAYDPRTWGKLAEASMAARVVEATQHLRSAGNKIK</sequence>
<dbReference type="EC" id="4.1.2.13"/>
<dbReference type="EMBL" id="AJ131707">
    <property type="protein sequence ID" value="CAA10483.2"/>
    <property type="molecule type" value="Genomic_DNA"/>
</dbReference>
<dbReference type="SMR" id="Q9ZEM7"/>
<dbReference type="STRING" id="33898.GCA_000772895_00072"/>
<dbReference type="UniPathway" id="UPA00109">
    <property type="reaction ID" value="UER00183"/>
</dbReference>
<dbReference type="GO" id="GO:0005829">
    <property type="term" value="C:cytosol"/>
    <property type="evidence" value="ECO:0007669"/>
    <property type="project" value="TreeGrafter"/>
</dbReference>
<dbReference type="GO" id="GO:0004332">
    <property type="term" value="F:fructose-bisphosphate aldolase activity"/>
    <property type="evidence" value="ECO:0007669"/>
    <property type="project" value="UniProtKB-EC"/>
</dbReference>
<dbReference type="GO" id="GO:0008270">
    <property type="term" value="F:zinc ion binding"/>
    <property type="evidence" value="ECO:0007669"/>
    <property type="project" value="InterPro"/>
</dbReference>
<dbReference type="GO" id="GO:0006096">
    <property type="term" value="P:glycolytic process"/>
    <property type="evidence" value="ECO:0007669"/>
    <property type="project" value="UniProtKB-UniPathway"/>
</dbReference>
<dbReference type="FunFam" id="3.20.20.70:FF:000112">
    <property type="entry name" value="Fructose-bisphosphate aldolase Fba"/>
    <property type="match status" value="1"/>
</dbReference>
<dbReference type="Gene3D" id="3.20.20.70">
    <property type="entry name" value="Aldolase class I"/>
    <property type="match status" value="1"/>
</dbReference>
<dbReference type="InterPro" id="IPR013785">
    <property type="entry name" value="Aldolase_TIM"/>
</dbReference>
<dbReference type="InterPro" id="IPR000771">
    <property type="entry name" value="FBA_II"/>
</dbReference>
<dbReference type="InterPro" id="IPR006411">
    <property type="entry name" value="Fruct_bisP_bact"/>
</dbReference>
<dbReference type="NCBIfam" id="TIGR00167">
    <property type="entry name" value="cbbA"/>
    <property type="match status" value="1"/>
</dbReference>
<dbReference type="NCBIfam" id="TIGR01520">
    <property type="entry name" value="FruBisAldo_II_A"/>
    <property type="match status" value="1"/>
</dbReference>
<dbReference type="NCBIfam" id="NF006628">
    <property type="entry name" value="PRK09197.1"/>
    <property type="match status" value="1"/>
</dbReference>
<dbReference type="PANTHER" id="PTHR30559:SF0">
    <property type="entry name" value="FRUCTOSE-BISPHOSPHATE ALDOLASE"/>
    <property type="match status" value="1"/>
</dbReference>
<dbReference type="PANTHER" id="PTHR30559">
    <property type="entry name" value="FRUCTOSE-BISPHOSPHATE ALDOLASE CLASS 2"/>
    <property type="match status" value="1"/>
</dbReference>
<dbReference type="Pfam" id="PF01116">
    <property type="entry name" value="F_bP_aldolase"/>
    <property type="match status" value="1"/>
</dbReference>
<dbReference type="PIRSF" id="PIRSF001359">
    <property type="entry name" value="F_bP_aldolase_II"/>
    <property type="match status" value="1"/>
</dbReference>
<dbReference type="SUPFAM" id="SSF51569">
    <property type="entry name" value="Aldolase"/>
    <property type="match status" value="1"/>
</dbReference>
<dbReference type="PROSITE" id="PS00602">
    <property type="entry name" value="ALDOLASE_CLASS_II_1"/>
    <property type="match status" value="1"/>
</dbReference>
<feature type="chain" id="PRO_0000178744" description="Fructose-bisphosphate aldolase">
    <location>
        <begin position="1"/>
        <end position="340"/>
    </location>
</feature>
<feature type="active site" description="Proton donor" evidence="1">
    <location>
        <position position="95"/>
    </location>
</feature>
<feature type="binding site" evidence="1">
    <location>
        <position position="53"/>
    </location>
    <ligand>
        <name>D-glyceraldehyde 3-phosphate</name>
        <dbReference type="ChEBI" id="CHEBI:59776"/>
    </ligand>
</feature>
<feature type="binding site" evidence="1">
    <location>
        <position position="96"/>
    </location>
    <ligand>
        <name>Zn(2+)</name>
        <dbReference type="ChEBI" id="CHEBI:29105"/>
        <label>1</label>
        <note>catalytic</note>
    </ligand>
</feature>
<feature type="binding site" evidence="1">
    <location>
        <position position="131"/>
    </location>
    <ligand>
        <name>Zn(2+)</name>
        <dbReference type="ChEBI" id="CHEBI:29105"/>
        <label>2</label>
    </ligand>
</feature>
<feature type="binding site" evidence="1">
    <location>
        <position position="161"/>
    </location>
    <ligand>
        <name>Zn(2+)</name>
        <dbReference type="ChEBI" id="CHEBI:29105"/>
        <label>2</label>
    </ligand>
</feature>
<feature type="binding site" evidence="1">
    <location>
        <position position="212"/>
    </location>
    <ligand>
        <name>Zn(2+)</name>
        <dbReference type="ChEBI" id="CHEBI:29105"/>
        <label>1</label>
        <note>catalytic</note>
    </ligand>
</feature>
<feature type="binding site" evidence="1">
    <location>
        <position position="213"/>
    </location>
    <ligand>
        <name>dihydroxyacetone phosphate</name>
        <dbReference type="ChEBI" id="CHEBI:57642"/>
    </ligand>
</feature>
<feature type="binding site" evidence="1">
    <location>
        <position position="249"/>
    </location>
    <ligand>
        <name>Zn(2+)</name>
        <dbReference type="ChEBI" id="CHEBI:29105"/>
        <label>1</label>
        <note>catalytic</note>
    </ligand>
</feature>
<feature type="binding site" evidence="1">
    <location>
        <begin position="250"/>
        <end position="252"/>
    </location>
    <ligand>
        <name>dihydroxyacetone phosphate</name>
        <dbReference type="ChEBI" id="CHEBI:57642"/>
    </ligand>
</feature>
<feature type="binding site" evidence="1">
    <location>
        <begin position="271"/>
        <end position="274"/>
    </location>
    <ligand>
        <name>dihydroxyacetone phosphate</name>
        <dbReference type="ChEBI" id="CHEBI:57642"/>
    </ligand>
</feature>
<organism>
    <name type="scientific">Streptomyces galbus</name>
    <dbReference type="NCBI Taxonomy" id="33898"/>
    <lineage>
        <taxon>Bacteria</taxon>
        <taxon>Bacillati</taxon>
        <taxon>Actinomycetota</taxon>
        <taxon>Actinomycetes</taxon>
        <taxon>Kitasatosporales</taxon>
        <taxon>Streptomycetaceae</taxon>
        <taxon>Streptomyces</taxon>
    </lineage>
</organism>
<gene>
    <name type="primary">fba</name>
    <name type="synonym">fda</name>
</gene>
<reference key="1">
    <citation type="journal article" date="2001" name="FEMS Microbiol. Lett.">
        <title>Molecular cloning, nucleotide sequence and structural analysis of the Streptomyces galbus DSM40480 fda gene: the S. galbus fructose-1,6-bisphosphate aldolase is a member of the class II aldolases.</title>
        <authorList>
            <person name="Wehmeier U.F."/>
        </authorList>
    </citation>
    <scope>NUCLEOTIDE SEQUENCE [GENOMIC DNA]</scope>
    <scope>CHARACTERIZATION</scope>
    <source>
        <strain>ATCC 14077 / CBS 700.72 / DSM 40480 / NBRC 13399 / VKM Ac-160</strain>
    </source>
</reference>